<name>APT_CHLAA</name>
<comment type="function">
    <text evidence="1">Catalyzes a salvage reaction resulting in the formation of AMP, that is energically less costly than de novo synthesis.</text>
</comment>
<comment type="catalytic activity">
    <reaction evidence="1">
        <text>AMP + diphosphate = 5-phospho-alpha-D-ribose 1-diphosphate + adenine</text>
        <dbReference type="Rhea" id="RHEA:16609"/>
        <dbReference type="ChEBI" id="CHEBI:16708"/>
        <dbReference type="ChEBI" id="CHEBI:33019"/>
        <dbReference type="ChEBI" id="CHEBI:58017"/>
        <dbReference type="ChEBI" id="CHEBI:456215"/>
        <dbReference type="EC" id="2.4.2.7"/>
    </reaction>
</comment>
<comment type="pathway">
    <text evidence="1">Purine metabolism; AMP biosynthesis via salvage pathway; AMP from adenine: step 1/1.</text>
</comment>
<comment type="subunit">
    <text evidence="1">Homodimer.</text>
</comment>
<comment type="subcellular location">
    <subcellularLocation>
        <location evidence="1">Cytoplasm</location>
    </subcellularLocation>
</comment>
<comment type="similarity">
    <text evidence="1">Belongs to the purine/pyrimidine phosphoribosyltransferase family.</text>
</comment>
<sequence>MTRQDLASLIRNIPDFPIPGIQFKDITTLIGNGQAFSEVIDRLHERYQNQQIDAVVGIESRGFIFSAPLAYRLGVGLVPIRKPGKLPAATYQIEYQLEYGTNRLEIHRDAFQPGARVLVIDDLLATGGTIAAACDLIEMAGGQVAELAFVIELTFLNGRERLRERPVFSLIQF</sequence>
<accession>A9WCV7</accession>
<protein>
    <recommendedName>
        <fullName evidence="1">Adenine phosphoribosyltransferase</fullName>
        <shortName evidence="1">APRT</shortName>
        <ecNumber evidence="1">2.4.2.7</ecNumber>
    </recommendedName>
</protein>
<feature type="chain" id="PRO_0000329338" description="Adenine phosphoribosyltransferase">
    <location>
        <begin position="1"/>
        <end position="173"/>
    </location>
</feature>
<reference key="1">
    <citation type="journal article" date="2011" name="BMC Genomics">
        <title>Complete genome sequence of the filamentous anoxygenic phototrophic bacterium Chloroflexus aurantiacus.</title>
        <authorList>
            <person name="Tang K.H."/>
            <person name="Barry K."/>
            <person name="Chertkov O."/>
            <person name="Dalin E."/>
            <person name="Han C.S."/>
            <person name="Hauser L.J."/>
            <person name="Honchak B.M."/>
            <person name="Karbach L.E."/>
            <person name="Land M.L."/>
            <person name="Lapidus A."/>
            <person name="Larimer F.W."/>
            <person name="Mikhailova N."/>
            <person name="Pitluck S."/>
            <person name="Pierson B.K."/>
            <person name="Blankenship R.E."/>
        </authorList>
    </citation>
    <scope>NUCLEOTIDE SEQUENCE [LARGE SCALE GENOMIC DNA]</scope>
    <source>
        <strain>ATCC 29366 / DSM 635 / J-10-fl</strain>
    </source>
</reference>
<gene>
    <name evidence="1" type="primary">apt</name>
    <name type="ordered locus">Caur_0273</name>
</gene>
<dbReference type="EC" id="2.4.2.7" evidence="1"/>
<dbReference type="EMBL" id="CP000909">
    <property type="protein sequence ID" value="ABY33526.1"/>
    <property type="molecule type" value="Genomic_DNA"/>
</dbReference>
<dbReference type="RefSeq" id="WP_012256182.1">
    <property type="nucleotide sequence ID" value="NC_010175.1"/>
</dbReference>
<dbReference type="RefSeq" id="YP_001633915.1">
    <property type="nucleotide sequence ID" value="NC_010175.1"/>
</dbReference>
<dbReference type="SMR" id="A9WCV7"/>
<dbReference type="FunCoup" id="A9WCV7">
    <property type="interactions" value="327"/>
</dbReference>
<dbReference type="STRING" id="324602.Caur_0273"/>
<dbReference type="EnsemblBacteria" id="ABY33526">
    <property type="protein sequence ID" value="ABY33526"/>
    <property type="gene ID" value="Caur_0273"/>
</dbReference>
<dbReference type="KEGG" id="cau:Caur_0273"/>
<dbReference type="PATRIC" id="fig|324602.8.peg.314"/>
<dbReference type="eggNOG" id="COG0503">
    <property type="taxonomic scope" value="Bacteria"/>
</dbReference>
<dbReference type="HOGENOM" id="CLU_063339_3_0_0"/>
<dbReference type="InParanoid" id="A9WCV7"/>
<dbReference type="UniPathway" id="UPA00588">
    <property type="reaction ID" value="UER00646"/>
</dbReference>
<dbReference type="Proteomes" id="UP000002008">
    <property type="component" value="Chromosome"/>
</dbReference>
<dbReference type="GO" id="GO:0005737">
    <property type="term" value="C:cytoplasm"/>
    <property type="evidence" value="ECO:0000318"/>
    <property type="project" value="GO_Central"/>
</dbReference>
<dbReference type="GO" id="GO:0002055">
    <property type="term" value="F:adenine binding"/>
    <property type="evidence" value="ECO:0000318"/>
    <property type="project" value="GO_Central"/>
</dbReference>
<dbReference type="GO" id="GO:0003999">
    <property type="term" value="F:adenine phosphoribosyltransferase activity"/>
    <property type="evidence" value="ECO:0000318"/>
    <property type="project" value="GO_Central"/>
</dbReference>
<dbReference type="GO" id="GO:0016208">
    <property type="term" value="F:AMP binding"/>
    <property type="evidence" value="ECO:0000318"/>
    <property type="project" value="GO_Central"/>
</dbReference>
<dbReference type="GO" id="GO:0006168">
    <property type="term" value="P:adenine salvage"/>
    <property type="evidence" value="ECO:0000318"/>
    <property type="project" value="GO_Central"/>
</dbReference>
<dbReference type="GO" id="GO:0044209">
    <property type="term" value="P:AMP salvage"/>
    <property type="evidence" value="ECO:0000318"/>
    <property type="project" value="GO_Central"/>
</dbReference>
<dbReference type="GO" id="GO:0006166">
    <property type="term" value="P:purine ribonucleoside salvage"/>
    <property type="evidence" value="ECO:0007669"/>
    <property type="project" value="UniProtKB-KW"/>
</dbReference>
<dbReference type="CDD" id="cd06223">
    <property type="entry name" value="PRTases_typeI"/>
    <property type="match status" value="1"/>
</dbReference>
<dbReference type="FunFam" id="3.40.50.2020:FF:000021">
    <property type="entry name" value="Adenine phosphoribosyltransferase"/>
    <property type="match status" value="1"/>
</dbReference>
<dbReference type="Gene3D" id="3.40.50.2020">
    <property type="match status" value="1"/>
</dbReference>
<dbReference type="HAMAP" id="MF_00004">
    <property type="entry name" value="Aden_phosphoribosyltr"/>
    <property type="match status" value="1"/>
</dbReference>
<dbReference type="InterPro" id="IPR005764">
    <property type="entry name" value="Ade_phspho_trans"/>
</dbReference>
<dbReference type="InterPro" id="IPR000836">
    <property type="entry name" value="PRibTrfase_dom"/>
</dbReference>
<dbReference type="InterPro" id="IPR029057">
    <property type="entry name" value="PRTase-like"/>
</dbReference>
<dbReference type="InterPro" id="IPR050054">
    <property type="entry name" value="UPRTase/APRTase"/>
</dbReference>
<dbReference type="NCBIfam" id="TIGR01090">
    <property type="entry name" value="apt"/>
    <property type="match status" value="1"/>
</dbReference>
<dbReference type="NCBIfam" id="NF002634">
    <property type="entry name" value="PRK02304.1-3"/>
    <property type="match status" value="1"/>
</dbReference>
<dbReference type="NCBIfam" id="NF002636">
    <property type="entry name" value="PRK02304.1-5"/>
    <property type="match status" value="1"/>
</dbReference>
<dbReference type="PANTHER" id="PTHR32315">
    <property type="entry name" value="ADENINE PHOSPHORIBOSYLTRANSFERASE"/>
    <property type="match status" value="1"/>
</dbReference>
<dbReference type="PANTHER" id="PTHR32315:SF3">
    <property type="entry name" value="ADENINE PHOSPHORIBOSYLTRANSFERASE"/>
    <property type="match status" value="1"/>
</dbReference>
<dbReference type="Pfam" id="PF00156">
    <property type="entry name" value="Pribosyltran"/>
    <property type="match status" value="1"/>
</dbReference>
<dbReference type="SUPFAM" id="SSF53271">
    <property type="entry name" value="PRTase-like"/>
    <property type="match status" value="1"/>
</dbReference>
<dbReference type="PROSITE" id="PS00103">
    <property type="entry name" value="PUR_PYR_PR_TRANSFER"/>
    <property type="match status" value="1"/>
</dbReference>
<evidence type="ECO:0000255" key="1">
    <source>
        <dbReference type="HAMAP-Rule" id="MF_00004"/>
    </source>
</evidence>
<organism>
    <name type="scientific">Chloroflexus aurantiacus (strain ATCC 29366 / DSM 635 / J-10-fl)</name>
    <dbReference type="NCBI Taxonomy" id="324602"/>
    <lineage>
        <taxon>Bacteria</taxon>
        <taxon>Bacillati</taxon>
        <taxon>Chloroflexota</taxon>
        <taxon>Chloroflexia</taxon>
        <taxon>Chloroflexales</taxon>
        <taxon>Chloroflexineae</taxon>
        <taxon>Chloroflexaceae</taxon>
        <taxon>Chloroflexus</taxon>
    </lineage>
</organism>
<keyword id="KW-0963">Cytoplasm</keyword>
<keyword id="KW-0328">Glycosyltransferase</keyword>
<keyword id="KW-0660">Purine salvage</keyword>
<keyword id="KW-1185">Reference proteome</keyword>
<keyword id="KW-0808">Transferase</keyword>
<proteinExistence type="inferred from homology"/>